<protein>
    <recommendedName>
        <fullName>V-type proton ATPase subunit E</fullName>
        <shortName>V-ATPase subunit E</shortName>
    </recommendedName>
    <alternativeName>
        <fullName>V-ATPase 26 kDa subunit</fullName>
    </alternativeName>
    <alternativeName>
        <fullName>Vacuolar proton pump subunit E</fullName>
    </alternativeName>
</protein>
<name>VATE_MANSE</name>
<proteinExistence type="evidence at transcript level"/>
<dbReference type="EMBL" id="X67131">
    <property type="protein sequence ID" value="CAA47610.1"/>
    <property type="molecule type" value="mRNA"/>
</dbReference>
<dbReference type="PIR" id="S25014">
    <property type="entry name" value="S25014"/>
</dbReference>
<dbReference type="SMR" id="P31402"/>
<dbReference type="DIP" id="DIP-61390N"/>
<dbReference type="IntAct" id="P31402">
    <property type="interactions" value="1"/>
</dbReference>
<dbReference type="EnsemblMetazoa" id="XM_030175593.2">
    <property type="protein sequence ID" value="XP_030031453.1"/>
    <property type="gene ID" value="LOC115448230"/>
</dbReference>
<dbReference type="OrthoDB" id="10263003at2759"/>
<dbReference type="GO" id="GO:0033178">
    <property type="term" value="C:proton-transporting two-sector ATPase complex, catalytic domain"/>
    <property type="evidence" value="ECO:0007669"/>
    <property type="project" value="InterPro"/>
</dbReference>
<dbReference type="GO" id="GO:0046961">
    <property type="term" value="F:proton-transporting ATPase activity, rotational mechanism"/>
    <property type="evidence" value="ECO:0007669"/>
    <property type="project" value="InterPro"/>
</dbReference>
<dbReference type="FunFam" id="3.30.2320.30:FF:000001">
    <property type="entry name" value="V-type proton atpase subunit e 1"/>
    <property type="match status" value="1"/>
</dbReference>
<dbReference type="Gene3D" id="6.10.250.1620">
    <property type="match status" value="1"/>
</dbReference>
<dbReference type="Gene3D" id="3.30.2320.30">
    <property type="entry name" value="ATP synthase, E subunit, C-terminal"/>
    <property type="match status" value="1"/>
</dbReference>
<dbReference type="HAMAP" id="MF_00311">
    <property type="entry name" value="ATP_synth_E_arch"/>
    <property type="match status" value="1"/>
</dbReference>
<dbReference type="InterPro" id="IPR038495">
    <property type="entry name" value="ATPase_E_C"/>
</dbReference>
<dbReference type="InterPro" id="IPR002842">
    <property type="entry name" value="ATPase_V1_Esu"/>
</dbReference>
<dbReference type="PANTHER" id="PTHR45715">
    <property type="entry name" value="ATPASE H+-TRANSPORTING V1 SUBUNIT E1A-RELATED"/>
    <property type="match status" value="1"/>
</dbReference>
<dbReference type="Pfam" id="PF01991">
    <property type="entry name" value="vATP-synt_E"/>
    <property type="match status" value="1"/>
</dbReference>
<dbReference type="SUPFAM" id="SSF160527">
    <property type="entry name" value="V-type ATPase subunit E-like"/>
    <property type="match status" value="1"/>
</dbReference>
<evidence type="ECO:0000250" key="1">
    <source>
        <dbReference type="UniProtKB" id="P36543"/>
    </source>
</evidence>
<evidence type="ECO:0000305" key="2"/>
<accession>P31402</accession>
<sequence>MALSDADVQKQIKHMMAFIEQEANEKAEEIDAKAEEEFNIEKGRLVQQQRLKIMEYYEKKEKQVELQKKIQSSNMLNQARLKVLKVREDHVRNVLDEARKRLAEVPKDIKLYSDLLVTLIVQALFQLVEPTVTLRVRQADKALVESLLGRAQQDYKAKIKKDVVLKIDNENFLPPDTCGGIELIAAKGRIKISNTLESRLELIAQQLLPEIRNALFGRNPNRKFTD</sequence>
<reference key="1">
    <citation type="journal article" date="1994" name="Biochim. Biophys. Acta">
        <title>Cloning, sequencing and expression of cDNA encoding an insect V-ATPase subunit E.</title>
        <authorList>
            <person name="Graef R."/>
            <person name="Harvey W.R."/>
            <person name="Wieczorek H."/>
        </authorList>
    </citation>
    <scope>NUCLEOTIDE SEQUENCE [MRNA]</scope>
    <source>
        <tissue>Midgut</tissue>
    </source>
</reference>
<gene>
    <name type="primary">VHA26</name>
</gene>
<keyword id="KW-0375">Hydrogen ion transport</keyword>
<keyword id="KW-0406">Ion transport</keyword>
<keyword id="KW-0813">Transport</keyword>
<organism>
    <name type="scientific">Manduca sexta</name>
    <name type="common">Tobacco hawkmoth</name>
    <name type="synonym">Tobacco hornworm</name>
    <dbReference type="NCBI Taxonomy" id="7130"/>
    <lineage>
        <taxon>Eukaryota</taxon>
        <taxon>Metazoa</taxon>
        <taxon>Ecdysozoa</taxon>
        <taxon>Arthropoda</taxon>
        <taxon>Hexapoda</taxon>
        <taxon>Insecta</taxon>
        <taxon>Pterygota</taxon>
        <taxon>Neoptera</taxon>
        <taxon>Endopterygota</taxon>
        <taxon>Lepidoptera</taxon>
        <taxon>Glossata</taxon>
        <taxon>Ditrysia</taxon>
        <taxon>Bombycoidea</taxon>
        <taxon>Sphingidae</taxon>
        <taxon>Sphinginae</taxon>
        <taxon>Sphingini</taxon>
        <taxon>Manduca</taxon>
    </lineage>
</organism>
<feature type="chain" id="PRO_0000117300" description="V-type proton ATPase subunit E">
    <location>
        <begin position="1"/>
        <end position="226"/>
    </location>
</feature>
<comment type="function">
    <text evidence="1">Subunit of the V1 complex of vacuolar(H+)-ATPase (V-ATPase), a multisubunit enzyme composed of a peripheral complex (V1) that hydrolyzes ATP and a membrane integral complex (V0) that translocates protons (By similarity). V-ATPase is responsible for acidifying and maintaining the pH of intracellular compartments and in some cell types, is targeted to the plasma membrane, where it is responsible for acidifying the extracellular environment (By similarity).</text>
</comment>
<comment type="subunit">
    <text evidence="1">V-ATPase is a heteromultimeric enzyme made up of two complexes: the ATP-hydrolytic V1 complex and the proton translocation V0 complex (By similarity). The V1 complex consists of three catalytic AB heterodimers that form a heterohexamer, three peripheral stalks each consisting of EG heterodimers, one central rotor including subunits D and F, and the regulatory subunits C and H (By similarity). The proton translocation complex V0 consists of the proton transport subunit a, a ring of proteolipid subunits c9c'', rotary subunit d, subunits e and f, and the accessory subunits VhaAC45 and ATP6AP2 (By similarity).</text>
</comment>
<comment type="similarity">
    <text evidence="2">Belongs to the V-ATPase E subunit family.</text>
</comment>